<gene>
    <name type="primary">TIC</name>
    <name type="ordered locus">At3g22380</name>
    <name type="ORF">MCB17.12</name>
</gene>
<reference key="1">
    <citation type="journal article" date="2000" name="DNA Res.">
        <title>Structural analysis of Arabidopsis thaliana chromosome 3. I. Sequence features of the regions of 4,504,864 bp covered by sixty P1 and TAC clones.</title>
        <authorList>
            <person name="Sato S."/>
            <person name="Nakamura Y."/>
            <person name="Kaneko T."/>
            <person name="Katoh T."/>
            <person name="Asamizu E."/>
            <person name="Tabata S."/>
        </authorList>
    </citation>
    <scope>NUCLEOTIDE SEQUENCE [LARGE SCALE GENOMIC DNA]</scope>
    <source>
        <strain>cv. Columbia</strain>
    </source>
</reference>
<reference key="2">
    <citation type="journal article" date="2017" name="Plant J.">
        <title>Araport11: a complete reannotation of the Arabidopsis thaliana reference genome.</title>
        <authorList>
            <person name="Cheng C.Y."/>
            <person name="Krishnakumar V."/>
            <person name="Chan A.P."/>
            <person name="Thibaud-Nissen F."/>
            <person name="Schobel S."/>
            <person name="Town C.D."/>
        </authorList>
    </citation>
    <scope>GENOME REANNOTATION</scope>
    <source>
        <strain>cv. Columbia</strain>
    </source>
</reference>
<reference key="3">
    <citation type="journal article" date="2003" name="Science">
        <title>Empirical analysis of transcriptional activity in the Arabidopsis genome.</title>
        <authorList>
            <person name="Yamada K."/>
            <person name="Lim J."/>
            <person name="Dale J.M."/>
            <person name="Chen H."/>
            <person name="Shinn P."/>
            <person name="Palm C.J."/>
            <person name="Southwick A.M."/>
            <person name="Wu H.C."/>
            <person name="Kim C.J."/>
            <person name="Nguyen M."/>
            <person name="Pham P.K."/>
            <person name="Cheuk R.F."/>
            <person name="Karlin-Newmann G."/>
            <person name="Liu S.X."/>
            <person name="Lam B."/>
            <person name="Sakano H."/>
            <person name="Wu T."/>
            <person name="Yu G."/>
            <person name="Miranda M."/>
            <person name="Quach H.L."/>
            <person name="Tripp M."/>
            <person name="Chang C.H."/>
            <person name="Lee J.M."/>
            <person name="Toriumi M.J."/>
            <person name="Chan M.M."/>
            <person name="Tang C.C."/>
            <person name="Onodera C.S."/>
            <person name="Deng J.M."/>
            <person name="Akiyama K."/>
            <person name="Ansari Y."/>
            <person name="Arakawa T."/>
            <person name="Banh J."/>
            <person name="Banno F."/>
            <person name="Bowser L."/>
            <person name="Brooks S.Y."/>
            <person name="Carninci P."/>
            <person name="Chao Q."/>
            <person name="Choy N."/>
            <person name="Enju A."/>
            <person name="Goldsmith A.D."/>
            <person name="Gurjal M."/>
            <person name="Hansen N.F."/>
            <person name="Hayashizaki Y."/>
            <person name="Johnson-Hopson C."/>
            <person name="Hsuan V.W."/>
            <person name="Iida K."/>
            <person name="Karnes M."/>
            <person name="Khan S."/>
            <person name="Koesema E."/>
            <person name="Ishida J."/>
            <person name="Jiang P.X."/>
            <person name="Jones T."/>
            <person name="Kawai J."/>
            <person name="Kamiya A."/>
            <person name="Meyers C."/>
            <person name="Nakajima M."/>
            <person name="Narusaka M."/>
            <person name="Seki M."/>
            <person name="Sakurai T."/>
            <person name="Satou M."/>
            <person name="Tamse R."/>
            <person name="Vaysberg M."/>
            <person name="Wallender E.K."/>
            <person name="Wong C."/>
            <person name="Yamamura Y."/>
            <person name="Yuan S."/>
            <person name="Shinozaki K."/>
            <person name="Davis R.W."/>
            <person name="Theologis A."/>
            <person name="Ecker J.R."/>
        </authorList>
    </citation>
    <scope>NUCLEOTIDE SEQUENCE [LARGE SCALE MRNA]</scope>
    <source>
        <strain>cv. Columbia</strain>
    </source>
</reference>
<reference key="4">
    <citation type="journal article" date="2003" name="Plant Cell">
        <title>The TIME FOR COFFEE gene maintains the amplitude and timing of Arabidopsis circadian clocks.</title>
        <authorList>
            <person name="Hall A."/>
            <person name="Bastow R.M."/>
            <person name="Davis S.J."/>
            <person name="Hanano S."/>
            <person name="McWatters H.G."/>
            <person name="Hibberd V."/>
            <person name="Doyle M.R."/>
            <person name="Sung S."/>
            <person name="Halliday K.J."/>
            <person name="Amasino R.M."/>
            <person name="Millar A.J."/>
        </authorList>
    </citation>
    <scope>FUNCTION</scope>
</reference>
<reference key="5">
    <citation type="journal article" date="2007" name="Plant Cell">
        <title>TIME FOR COFFEE encodes a nuclear regulator in the Arabidopsis thaliana circadian clock.</title>
        <authorList>
            <person name="Ding Z."/>
            <person name="Millar A.J."/>
            <person name="Davis A.M."/>
            <person name="Davis S.J."/>
        </authorList>
    </citation>
    <scope>FUNCTION</scope>
    <scope>DISRUPTION PHENOTYPE</scope>
    <scope>DEVELOPMENTAL STAGE</scope>
    <scope>SUBCELLULAR LOCATION</scope>
</reference>
<reference key="6">
    <citation type="journal article" date="2009" name="Plant Physiol.">
        <title>Large-scale Arabidopsis phosphoproteome profiling reveals novel chloroplast kinase substrates and phosphorylation networks.</title>
        <authorList>
            <person name="Reiland S."/>
            <person name="Messerli G."/>
            <person name="Baerenfaller K."/>
            <person name="Gerrits B."/>
            <person name="Endler A."/>
            <person name="Grossmann J."/>
            <person name="Gruissem W."/>
            <person name="Baginsky S."/>
        </authorList>
    </citation>
    <scope>IDENTIFICATION BY MASS SPECTROMETRY [LARGE SCALE ANALYSIS]</scope>
</reference>
<reference key="7">
    <citation type="journal article" date="2012" name="Plant Cell">
        <title>TIME FOR COFFEE represses accumulation of the MYC2 transcription factor to provide time-of-day regulation of jasmonate signaling in Arabidopsis.</title>
        <authorList>
            <person name="Shin J."/>
            <person name="Heidrich K."/>
            <person name="Sanchez-Villarreal A."/>
            <person name="Parker J.E."/>
            <person name="Davis S.J."/>
        </authorList>
    </citation>
    <scope>FUNCTION</scope>
    <scope>INTERACTION WITH MYC2</scope>
</reference>
<evidence type="ECO:0000256" key="1">
    <source>
        <dbReference type="SAM" id="MobiDB-lite"/>
    </source>
</evidence>
<evidence type="ECO:0000269" key="2">
    <source>
    </source>
</evidence>
<evidence type="ECO:0000269" key="3">
    <source>
    </source>
</evidence>
<evidence type="ECO:0000269" key="4">
    <source>
    </source>
</evidence>
<evidence type="ECO:0000305" key="5"/>
<sequence length="1550" mass="164456">MDRNREARRVPMAAAGNGLSRRRHRAGSFRDSPEEEGPVELPEAARLRDRGGSNKKDRDRERDRDRERERERDRERDRLNSRSKRRRGERLMMVHGNLDDGGDDSSEESVNDDEEYDDGGVGPPSSLKMLPPTSNNISAASFSSSLSNHHNGGSGNLHHHHHSHNNNHQRKNNFPPTKVFRSSPSPAPVSPLVSTWKAADEMIGVSVPRKARSACTKRPHESWASSTTGGGVFASGEQIHRQISSTSPANRVSPASILASPSPPAPTSPSSSSISVRKKLPSGTKQKPLPPKSSSSKLSSPVAVQDEIEIEIAEVLYGMMRMPSTSKQEAAGNDLTEAAKSTVEVKSRVSSPISNPQTLPQSSITLAANSSSSNVSAIAPKRKKPRHVKYEDDNSSRVTTIKSEAEAPSKSQVPFSNQLKSSGSGEGNSSVLDSIIPLTRESNASLDSEKKENNLSKDETILPKVESSSGFRSDGEGAKSSSPEKEKFEIDLMAPPPVRSSSERGGEMMECVAAEAKPKVTEVETEAKPLLKEDRSDPAIHDSQEKKRPRMVAEAEHHKFERNCELKLDLDKSDHVGLVNKHHVQKPPPQQQLSVPDKTAQASHLPLHMSMPGWPGGLPTMGYMAPTQGVVPTDTSSLSAAAMQPPPHLLFNQPRPKRCATHCYIARNIQSHQQFTKMNPFWPAAAGSAPMYGTKACNLSLMPPTELQGSVLGRSSNPVQDKNSQSTSKSSETAQRNQLMLQQALPPGAANSILHGPTFIFPLGQQPHAAATIAAASVRPPNSGITSSGPTATSTSMNGSASATPAGAPTMSFSYPAMPGNETQYLAILQNNGYPFPVPAHVGAQPAYRGAPGQPMPFFNGSFYSSQMIQPPHHQPQKQHQQQLTGQMLQSHAPNNQNGSASTGSSAAQKHLQNQQLRPPINHGNSQGFPTHKVQSQPLNFQQRQQPRENATQHSETVGEDSPSTADSRGSRSNVAYGQNYGMQMQPTNLGLMSSPAPGGGVVGSSSSHGEKKSQQQVSKAGVESFQSPGYAMTFATFNGANTAPTLNMSSIAQNHAMFHSMPEAARQGYQMMAAQAAQQKMNYGASLEDGKSGSIGGAATANNTPEEQRKSGGGAIGKTSGGNGGQSIAFSNKQDLADASVSAVTSGSIVDSSSRLLNLGSALPQSSGSLPTSHHQQLLQQQQQQHMQRSQSQQPYTTMYLQKQQRYATSVAASAARTKGPVVSNGSGFPDHNMTTSPAGTTKFANANSGFPQNLVQSSSNQVQSQQWKNNSPRTTNTTQAQSPSMLSPSTSVAAASSLRNIPHKQQSRPQQSQISFAANSKPMTSGSPMQQVQGGTNHQAPSPPMLVGSPSTSSVSKNASGSPRTTASASSAANKGGQASTTTHSASQPSKNLQPASAASSAGGRNNGPSVLGNPTTSSGSKSQQQQQLPKHGLQPQAQLFFSNPYMQAQHQHQQQQITISPSGGYYIQRHQQQSGSAPAVPVTGAVTATSDPAKAIAAASAANNMKGGGGMGKTQQHQLGPPGFTNVHAVSSAVQVKPVDQKQQAGE</sequence>
<comment type="function">
    <text evidence="2 3 4">Regulator of normal clock function. Acts in the mid to late night. Contributes to the amplitude of circadian clocks. May act on the transcriptional induction of LATE ELONGATED HYPOCOTYL (LHY). Inhibits MYC2 protein accumulation, acting as a negative factor in the JA-signaling pathway.</text>
</comment>
<comment type="subunit">
    <text evidence="4">Interacts with MYC2.</text>
</comment>
<comment type="subcellular location">
    <subcellularLocation>
        <location evidence="3">Nucleus</location>
    </subcellularLocation>
</comment>
<comment type="alternative products">
    <event type="alternative splicing"/>
    <isoform>
        <id>Q94KE2-1</id>
        <name>1</name>
        <sequence type="displayed"/>
    </isoform>
    <text>A number of isoforms are produced. According to EST sequences.</text>
</comment>
<comment type="developmental stage">
    <text evidence="3">Constitutively expressed over circadian time (at protein level). Not autoregulated.</text>
</comment>
<comment type="disruption phenotype">
    <text evidence="3">Plants have a reduced amplitude and accuracy of circadian rhythms.</text>
</comment>
<comment type="miscellaneous">
    <text>Called 'TIME FOR COFFEE' because it acts in the mid to late night, a phase at which any human activity often requires coffee.</text>
</comment>
<comment type="sequence caution" evidence="5">
    <conflict type="frameshift">
        <sequence resource="EMBL-CDS" id="AAK56246"/>
    </conflict>
</comment>
<comment type="sequence caution" evidence="5">
    <conflict type="erroneous gene model prediction">
        <sequence resource="EMBL-CDS" id="BAB01776"/>
    </conflict>
</comment>
<keyword id="KW-0025">Alternative splicing</keyword>
<keyword id="KW-0090">Biological rhythms</keyword>
<keyword id="KW-0539">Nucleus</keyword>
<keyword id="KW-1185">Reference proteome</keyword>
<protein>
    <recommendedName>
        <fullName>Protein TIME FOR COFFEE</fullName>
    </recommendedName>
</protein>
<accession>Q94KE2</accession>
<accession>Q94C89</accession>
<accession>Q9LUW1</accession>
<feature type="chain" id="PRO_0000326473" description="Protein TIME FOR COFFEE">
    <location>
        <begin position="1"/>
        <end position="1550"/>
    </location>
</feature>
<feature type="region of interest" description="Disordered" evidence="1">
    <location>
        <begin position="1"/>
        <end position="191"/>
    </location>
</feature>
<feature type="region of interest" description="Disordered" evidence="1">
    <location>
        <begin position="207"/>
        <end position="304"/>
    </location>
</feature>
<feature type="region of interest" description="Disordered" evidence="1">
    <location>
        <begin position="325"/>
        <end position="505"/>
    </location>
</feature>
<feature type="region of interest" description="Disordered" evidence="1">
    <location>
        <begin position="708"/>
        <end position="736"/>
    </location>
</feature>
<feature type="region of interest" description="Disordered" evidence="1">
    <location>
        <begin position="779"/>
        <end position="805"/>
    </location>
</feature>
<feature type="region of interest" description="Disordered" evidence="1">
    <location>
        <begin position="859"/>
        <end position="1023"/>
    </location>
</feature>
<feature type="region of interest" description="Disordered" evidence="1">
    <location>
        <begin position="1086"/>
        <end position="1130"/>
    </location>
</feature>
<feature type="region of interest" description="Disordered" evidence="1">
    <location>
        <begin position="1163"/>
        <end position="1196"/>
    </location>
</feature>
<feature type="region of interest" description="Disordered" evidence="1">
    <location>
        <begin position="1213"/>
        <end position="1296"/>
    </location>
</feature>
<feature type="region of interest" description="Disordered" evidence="1">
    <location>
        <begin position="1321"/>
        <end position="1435"/>
    </location>
</feature>
<feature type="compositionally biased region" description="Basic and acidic residues" evidence="1">
    <location>
        <begin position="43"/>
        <end position="80"/>
    </location>
</feature>
<feature type="compositionally biased region" description="Acidic residues" evidence="1">
    <location>
        <begin position="100"/>
        <end position="118"/>
    </location>
</feature>
<feature type="compositionally biased region" description="Low complexity" evidence="1">
    <location>
        <begin position="134"/>
        <end position="151"/>
    </location>
</feature>
<feature type="compositionally biased region" description="Basic residues" evidence="1">
    <location>
        <begin position="157"/>
        <end position="171"/>
    </location>
</feature>
<feature type="compositionally biased region" description="Polar residues" evidence="1">
    <location>
        <begin position="241"/>
        <end position="250"/>
    </location>
</feature>
<feature type="compositionally biased region" description="Low complexity" evidence="1">
    <location>
        <begin position="292"/>
        <end position="301"/>
    </location>
</feature>
<feature type="compositionally biased region" description="Polar residues" evidence="1">
    <location>
        <begin position="348"/>
        <end position="366"/>
    </location>
</feature>
<feature type="compositionally biased region" description="Low complexity" evidence="1">
    <location>
        <begin position="367"/>
        <end position="379"/>
    </location>
</feature>
<feature type="compositionally biased region" description="Polar residues" evidence="1">
    <location>
        <begin position="409"/>
        <end position="432"/>
    </location>
</feature>
<feature type="compositionally biased region" description="Basic and acidic residues" evidence="1">
    <location>
        <begin position="447"/>
        <end position="461"/>
    </location>
</feature>
<feature type="compositionally biased region" description="Basic and acidic residues" evidence="1">
    <location>
        <begin position="473"/>
        <end position="490"/>
    </location>
</feature>
<feature type="compositionally biased region" description="Polar residues" evidence="1">
    <location>
        <begin position="713"/>
        <end position="736"/>
    </location>
</feature>
<feature type="compositionally biased region" description="Polar residues" evidence="1">
    <location>
        <begin position="783"/>
        <end position="803"/>
    </location>
</feature>
<feature type="compositionally biased region" description="Polar residues" evidence="1">
    <location>
        <begin position="884"/>
        <end position="992"/>
    </location>
</feature>
<feature type="compositionally biased region" description="Gly residues" evidence="1">
    <location>
        <begin position="1112"/>
        <end position="1126"/>
    </location>
</feature>
<feature type="compositionally biased region" description="Polar residues" evidence="1">
    <location>
        <begin position="1164"/>
        <end position="1173"/>
    </location>
</feature>
<feature type="compositionally biased region" description="Low complexity" evidence="1">
    <location>
        <begin position="1174"/>
        <end position="1195"/>
    </location>
</feature>
<feature type="compositionally biased region" description="Polar residues" evidence="1">
    <location>
        <begin position="1234"/>
        <end position="1253"/>
    </location>
</feature>
<feature type="compositionally biased region" description="Low complexity" evidence="1">
    <location>
        <begin position="1254"/>
        <end position="1273"/>
    </location>
</feature>
<feature type="compositionally biased region" description="Polar residues" evidence="1">
    <location>
        <begin position="1274"/>
        <end position="1296"/>
    </location>
</feature>
<feature type="compositionally biased region" description="Polar residues" evidence="1">
    <location>
        <begin position="1321"/>
        <end position="1342"/>
    </location>
</feature>
<feature type="compositionally biased region" description="Polar residues" evidence="1">
    <location>
        <begin position="1351"/>
        <end position="1360"/>
    </location>
</feature>
<feature type="compositionally biased region" description="Low complexity" evidence="1">
    <location>
        <begin position="1361"/>
        <end position="1382"/>
    </location>
</feature>
<feature type="compositionally biased region" description="Polar residues" evidence="1">
    <location>
        <begin position="1383"/>
        <end position="1397"/>
    </location>
</feature>
<feature type="compositionally biased region" description="Polar residues" evidence="1">
    <location>
        <begin position="1405"/>
        <end position="1419"/>
    </location>
</feature>
<feature type="compositionally biased region" description="Low complexity" evidence="1">
    <location>
        <begin position="1420"/>
        <end position="1435"/>
    </location>
</feature>
<name>TIC_ARATH</name>
<proteinExistence type="evidence at protein level"/>
<dbReference type="EMBL" id="AB022215">
    <property type="protein sequence ID" value="BAB01776.1"/>
    <property type="status" value="ALT_SEQ"/>
    <property type="molecule type" value="Genomic_DNA"/>
</dbReference>
<dbReference type="EMBL" id="CP002686">
    <property type="protein sequence ID" value="AEE76628.1"/>
    <property type="molecule type" value="Genomic_DNA"/>
</dbReference>
<dbReference type="EMBL" id="AF367257">
    <property type="protein sequence ID" value="AAK56246.1"/>
    <property type="status" value="ALT_FRAME"/>
    <property type="molecule type" value="mRNA"/>
</dbReference>
<dbReference type="EMBL" id="AY035062">
    <property type="protein sequence ID" value="AAK59567.2"/>
    <property type="molecule type" value="mRNA"/>
</dbReference>
<dbReference type="RefSeq" id="NP_566705.1">
    <molecule id="Q94KE2-1"/>
    <property type="nucleotide sequence ID" value="NM_113136.4"/>
</dbReference>
<dbReference type="BioGRID" id="7139">
    <property type="interactions" value="11"/>
</dbReference>
<dbReference type="FunCoup" id="Q94KE2">
    <property type="interactions" value="1460"/>
</dbReference>
<dbReference type="IntAct" id="Q94KE2">
    <property type="interactions" value="2"/>
</dbReference>
<dbReference type="STRING" id="3702.Q94KE2"/>
<dbReference type="GlyGen" id="Q94KE2">
    <property type="glycosylation" value="11 sites, 1 O-linked glycan (8 sites)"/>
</dbReference>
<dbReference type="iPTMnet" id="Q94KE2"/>
<dbReference type="PaxDb" id="3702-AT3G22380.2"/>
<dbReference type="ProteomicsDB" id="234279">
    <molecule id="Q94KE2-1"/>
</dbReference>
<dbReference type="EnsemblPlants" id="AT3G22380.1">
    <molecule id="Q94KE2-1"/>
    <property type="protein sequence ID" value="AT3G22380.1"/>
    <property type="gene ID" value="AT3G22380"/>
</dbReference>
<dbReference type="GeneID" id="821807"/>
<dbReference type="Gramene" id="AT3G22380.1">
    <molecule id="Q94KE2-1"/>
    <property type="protein sequence ID" value="AT3G22380.1"/>
    <property type="gene ID" value="AT3G22380"/>
</dbReference>
<dbReference type="KEGG" id="ath:AT3G22380"/>
<dbReference type="Araport" id="AT3G22380"/>
<dbReference type="TAIR" id="AT3G22380">
    <property type="gene designation" value="TIC"/>
</dbReference>
<dbReference type="eggNOG" id="ENOG502QTJH">
    <property type="taxonomic scope" value="Eukaryota"/>
</dbReference>
<dbReference type="HOGENOM" id="CLU_002205_0_0_1"/>
<dbReference type="InParanoid" id="Q94KE2"/>
<dbReference type="PhylomeDB" id="Q94KE2"/>
<dbReference type="CD-CODE" id="4299E36E">
    <property type="entry name" value="Nucleolus"/>
</dbReference>
<dbReference type="PRO" id="PR:Q94KE2"/>
<dbReference type="Proteomes" id="UP000006548">
    <property type="component" value="Chromosome 3"/>
</dbReference>
<dbReference type="ExpressionAtlas" id="Q94KE2">
    <property type="expression patterns" value="baseline and differential"/>
</dbReference>
<dbReference type="GO" id="GO:0005634">
    <property type="term" value="C:nucleus"/>
    <property type="evidence" value="ECO:0007669"/>
    <property type="project" value="UniProtKB-SubCell"/>
</dbReference>
<dbReference type="GO" id="GO:0042752">
    <property type="term" value="P:regulation of circadian rhythm"/>
    <property type="evidence" value="ECO:0007669"/>
    <property type="project" value="InterPro"/>
</dbReference>
<dbReference type="GO" id="GO:0048511">
    <property type="term" value="P:rhythmic process"/>
    <property type="evidence" value="ECO:0007669"/>
    <property type="project" value="UniProtKB-KW"/>
</dbReference>
<dbReference type="InterPro" id="IPR039317">
    <property type="entry name" value="TIC"/>
</dbReference>
<dbReference type="PANTHER" id="PTHR34798">
    <property type="entry name" value="PROTEIN TIME FOR COFFEE"/>
    <property type="match status" value="1"/>
</dbReference>
<dbReference type="PANTHER" id="PTHR34798:SF2">
    <property type="entry name" value="PROTEIN TIME FOR COFFEE"/>
    <property type="match status" value="1"/>
</dbReference>
<organism>
    <name type="scientific">Arabidopsis thaliana</name>
    <name type="common">Mouse-ear cress</name>
    <dbReference type="NCBI Taxonomy" id="3702"/>
    <lineage>
        <taxon>Eukaryota</taxon>
        <taxon>Viridiplantae</taxon>
        <taxon>Streptophyta</taxon>
        <taxon>Embryophyta</taxon>
        <taxon>Tracheophyta</taxon>
        <taxon>Spermatophyta</taxon>
        <taxon>Magnoliopsida</taxon>
        <taxon>eudicotyledons</taxon>
        <taxon>Gunneridae</taxon>
        <taxon>Pentapetalae</taxon>
        <taxon>rosids</taxon>
        <taxon>malvids</taxon>
        <taxon>Brassicales</taxon>
        <taxon>Brassicaceae</taxon>
        <taxon>Camelineae</taxon>
        <taxon>Arabidopsis</taxon>
    </lineage>
</organism>